<dbReference type="EC" id="3.2.2.27" evidence="1"/>
<dbReference type="EMBL" id="CP000038">
    <property type="protein sequence ID" value="AAZ89327.1"/>
    <property type="molecule type" value="Genomic_DNA"/>
</dbReference>
<dbReference type="RefSeq" id="WP_001262716.1">
    <property type="nucleotide sequence ID" value="NC_007384.1"/>
</dbReference>
<dbReference type="SMR" id="Q3YYT5"/>
<dbReference type="GeneID" id="93774506"/>
<dbReference type="KEGG" id="ssn:SSON_2706"/>
<dbReference type="HOGENOM" id="CLU_032162_3_1_6"/>
<dbReference type="Proteomes" id="UP000002529">
    <property type="component" value="Chromosome"/>
</dbReference>
<dbReference type="GO" id="GO:0005737">
    <property type="term" value="C:cytoplasm"/>
    <property type="evidence" value="ECO:0007669"/>
    <property type="project" value="UniProtKB-SubCell"/>
</dbReference>
<dbReference type="GO" id="GO:0004844">
    <property type="term" value="F:uracil DNA N-glycosylase activity"/>
    <property type="evidence" value="ECO:0007669"/>
    <property type="project" value="UniProtKB-UniRule"/>
</dbReference>
<dbReference type="GO" id="GO:0097510">
    <property type="term" value="P:base-excision repair, AP site formation via deaminated base removal"/>
    <property type="evidence" value="ECO:0007669"/>
    <property type="project" value="TreeGrafter"/>
</dbReference>
<dbReference type="CDD" id="cd10027">
    <property type="entry name" value="UDG-F1-like"/>
    <property type="match status" value="1"/>
</dbReference>
<dbReference type="FunFam" id="3.40.470.10:FF:000001">
    <property type="entry name" value="Uracil-DNA glycosylase"/>
    <property type="match status" value="1"/>
</dbReference>
<dbReference type="Gene3D" id="3.40.470.10">
    <property type="entry name" value="Uracil-DNA glycosylase-like domain"/>
    <property type="match status" value="1"/>
</dbReference>
<dbReference type="HAMAP" id="MF_00148">
    <property type="entry name" value="UDG"/>
    <property type="match status" value="1"/>
</dbReference>
<dbReference type="InterPro" id="IPR002043">
    <property type="entry name" value="UDG_fam1"/>
</dbReference>
<dbReference type="InterPro" id="IPR018085">
    <property type="entry name" value="Ura-DNA_Glyclase_AS"/>
</dbReference>
<dbReference type="InterPro" id="IPR005122">
    <property type="entry name" value="Uracil-DNA_glycosylase-like"/>
</dbReference>
<dbReference type="InterPro" id="IPR036895">
    <property type="entry name" value="Uracil-DNA_glycosylase-like_sf"/>
</dbReference>
<dbReference type="NCBIfam" id="NF003588">
    <property type="entry name" value="PRK05254.1-1"/>
    <property type="match status" value="1"/>
</dbReference>
<dbReference type="NCBIfam" id="NF003589">
    <property type="entry name" value="PRK05254.1-2"/>
    <property type="match status" value="1"/>
</dbReference>
<dbReference type="NCBIfam" id="NF003591">
    <property type="entry name" value="PRK05254.1-4"/>
    <property type="match status" value="1"/>
</dbReference>
<dbReference type="NCBIfam" id="NF003592">
    <property type="entry name" value="PRK05254.1-5"/>
    <property type="match status" value="1"/>
</dbReference>
<dbReference type="NCBIfam" id="TIGR00628">
    <property type="entry name" value="ung"/>
    <property type="match status" value="1"/>
</dbReference>
<dbReference type="PANTHER" id="PTHR11264">
    <property type="entry name" value="URACIL-DNA GLYCOSYLASE"/>
    <property type="match status" value="1"/>
</dbReference>
<dbReference type="PANTHER" id="PTHR11264:SF0">
    <property type="entry name" value="URACIL-DNA GLYCOSYLASE"/>
    <property type="match status" value="1"/>
</dbReference>
<dbReference type="Pfam" id="PF03167">
    <property type="entry name" value="UDG"/>
    <property type="match status" value="1"/>
</dbReference>
<dbReference type="SMART" id="SM00986">
    <property type="entry name" value="UDG"/>
    <property type="match status" value="1"/>
</dbReference>
<dbReference type="SMART" id="SM00987">
    <property type="entry name" value="UreE_C"/>
    <property type="match status" value="1"/>
</dbReference>
<dbReference type="SUPFAM" id="SSF52141">
    <property type="entry name" value="Uracil-DNA glycosylase-like"/>
    <property type="match status" value="1"/>
</dbReference>
<dbReference type="PROSITE" id="PS00130">
    <property type="entry name" value="U_DNA_GLYCOSYLASE"/>
    <property type="match status" value="1"/>
</dbReference>
<accession>Q3YYT5</accession>
<keyword id="KW-0963">Cytoplasm</keyword>
<keyword id="KW-0227">DNA damage</keyword>
<keyword id="KW-0234">DNA repair</keyword>
<keyword id="KW-0378">Hydrolase</keyword>
<keyword id="KW-1185">Reference proteome</keyword>
<reference key="1">
    <citation type="journal article" date="2005" name="Nucleic Acids Res.">
        <title>Genome dynamics and diversity of Shigella species, the etiologic agents of bacillary dysentery.</title>
        <authorList>
            <person name="Yang F."/>
            <person name="Yang J."/>
            <person name="Zhang X."/>
            <person name="Chen L."/>
            <person name="Jiang Y."/>
            <person name="Yan Y."/>
            <person name="Tang X."/>
            <person name="Wang J."/>
            <person name="Xiong Z."/>
            <person name="Dong J."/>
            <person name="Xue Y."/>
            <person name="Zhu Y."/>
            <person name="Xu X."/>
            <person name="Sun L."/>
            <person name="Chen S."/>
            <person name="Nie H."/>
            <person name="Peng J."/>
            <person name="Xu J."/>
            <person name="Wang Y."/>
            <person name="Yuan Z."/>
            <person name="Wen Y."/>
            <person name="Yao Z."/>
            <person name="Shen Y."/>
            <person name="Qiang B."/>
            <person name="Hou Y."/>
            <person name="Yu J."/>
            <person name="Jin Q."/>
        </authorList>
    </citation>
    <scope>NUCLEOTIDE SEQUENCE [LARGE SCALE GENOMIC DNA]</scope>
    <source>
        <strain>Ss046</strain>
    </source>
</reference>
<sequence>MANELTWHDVLAEEKQQPYFLNTLQTVASERQSGVTIYPPQKDVFNAFRFTELGDVKVVILGQDPYHGPGQAHGLAFSVRPGIAIPPSLLNMYKELENTIPGFTRPNHGYLESWARQGVLLLNTVLTVRAGQAHSHASLGWETFTDKVISLINQHREGVVFLLWGSHAQKKGAIIDKQRHHVLKAPHPSPLSAHRGFFGCNHFVLANQWLEQRGETPIDWMPVLPAESE</sequence>
<feature type="chain" id="PRO_1000009940" description="Uracil-DNA glycosylase">
    <location>
        <begin position="1"/>
        <end position="229"/>
    </location>
</feature>
<feature type="active site" description="Proton acceptor" evidence="1">
    <location>
        <position position="64"/>
    </location>
</feature>
<protein>
    <recommendedName>
        <fullName evidence="1">Uracil-DNA glycosylase</fullName>
        <shortName evidence="1">UDG</shortName>
        <ecNumber evidence="1">3.2.2.27</ecNumber>
    </recommendedName>
</protein>
<name>UNG_SHISS</name>
<gene>
    <name evidence="1" type="primary">ung</name>
    <name type="ordered locus">SSON_2706</name>
</gene>
<comment type="function">
    <text evidence="1">Excises uracil residues from the DNA which can arise as a result of misincorporation of dUMP residues by DNA polymerase or due to deamination of cytosine.</text>
</comment>
<comment type="catalytic activity">
    <reaction evidence="1">
        <text>Hydrolyzes single-stranded DNA or mismatched double-stranded DNA and polynucleotides, releasing free uracil.</text>
        <dbReference type="EC" id="3.2.2.27"/>
    </reaction>
</comment>
<comment type="subcellular location">
    <subcellularLocation>
        <location evidence="1">Cytoplasm</location>
    </subcellularLocation>
</comment>
<comment type="similarity">
    <text evidence="1">Belongs to the uracil-DNA glycosylase (UDG) superfamily. UNG family.</text>
</comment>
<organism>
    <name type="scientific">Shigella sonnei (strain Ss046)</name>
    <dbReference type="NCBI Taxonomy" id="300269"/>
    <lineage>
        <taxon>Bacteria</taxon>
        <taxon>Pseudomonadati</taxon>
        <taxon>Pseudomonadota</taxon>
        <taxon>Gammaproteobacteria</taxon>
        <taxon>Enterobacterales</taxon>
        <taxon>Enterobacteriaceae</taxon>
        <taxon>Shigella</taxon>
    </lineage>
</organism>
<evidence type="ECO:0000255" key="1">
    <source>
        <dbReference type="HAMAP-Rule" id="MF_00148"/>
    </source>
</evidence>
<proteinExistence type="inferred from homology"/>